<reference key="1">
    <citation type="journal article" date="2008" name="J. Bacteriol.">
        <title>Genome of the actinomycete plant pathogen Clavibacter michiganensis subsp. sepedonicus suggests recent niche adaptation.</title>
        <authorList>
            <person name="Bentley S.D."/>
            <person name="Corton C."/>
            <person name="Brown S.E."/>
            <person name="Barron A."/>
            <person name="Clark L."/>
            <person name="Doggett J."/>
            <person name="Harris B."/>
            <person name="Ormond D."/>
            <person name="Quail M.A."/>
            <person name="May G."/>
            <person name="Francis D."/>
            <person name="Knudson D."/>
            <person name="Parkhill J."/>
            <person name="Ishimaru C.A."/>
        </authorList>
    </citation>
    <scope>NUCLEOTIDE SEQUENCE [LARGE SCALE GENOMIC DNA]</scope>
    <source>
        <strain>ATCC 33113 / DSM 20744 / JCM 9667 / LMG 2889 / ICMP 2535 / C-1</strain>
    </source>
</reference>
<accession>B0RF30</accession>
<comment type="subcellular location">
    <subcellularLocation>
        <location evidence="1">Cell membrane</location>
        <topology evidence="1">Multi-pass membrane protein</topology>
    </subcellularLocation>
</comment>
<comment type="similarity">
    <text evidence="1">Belongs to the UPF0060 family.</text>
</comment>
<name>Y846_CLASE</name>
<organism>
    <name type="scientific">Clavibacter sepedonicus</name>
    <name type="common">Clavibacter michiganensis subsp. sepedonicus</name>
    <dbReference type="NCBI Taxonomy" id="31964"/>
    <lineage>
        <taxon>Bacteria</taxon>
        <taxon>Bacillati</taxon>
        <taxon>Actinomycetota</taxon>
        <taxon>Actinomycetes</taxon>
        <taxon>Micrococcales</taxon>
        <taxon>Microbacteriaceae</taxon>
        <taxon>Clavibacter</taxon>
    </lineage>
</organism>
<proteinExistence type="inferred from homology"/>
<evidence type="ECO:0000255" key="1">
    <source>
        <dbReference type="HAMAP-Rule" id="MF_00010"/>
    </source>
</evidence>
<protein>
    <recommendedName>
        <fullName evidence="1">UPF0060 membrane protein CMS0846</fullName>
    </recommendedName>
</protein>
<feature type="chain" id="PRO_1000073926" description="UPF0060 membrane protein CMS0846">
    <location>
        <begin position="1"/>
        <end position="112"/>
    </location>
</feature>
<feature type="transmembrane region" description="Helical" evidence="1">
    <location>
        <begin position="6"/>
        <end position="26"/>
    </location>
</feature>
<feature type="transmembrane region" description="Helical" evidence="1">
    <location>
        <begin position="32"/>
        <end position="52"/>
    </location>
</feature>
<feature type="transmembrane region" description="Helical" evidence="1">
    <location>
        <begin position="61"/>
        <end position="81"/>
    </location>
</feature>
<feature type="transmembrane region" description="Helical" evidence="1">
    <location>
        <begin position="87"/>
        <end position="107"/>
    </location>
</feature>
<keyword id="KW-1003">Cell membrane</keyword>
<keyword id="KW-0472">Membrane</keyword>
<keyword id="KW-0812">Transmembrane</keyword>
<keyword id="KW-1133">Transmembrane helix</keyword>
<dbReference type="EMBL" id="AM849034">
    <property type="protein sequence ID" value="CAQ00963.1"/>
    <property type="molecule type" value="Genomic_DNA"/>
</dbReference>
<dbReference type="RefSeq" id="WP_012298267.1">
    <property type="nucleotide sequence ID" value="NZ_MZMN01000003.1"/>
</dbReference>
<dbReference type="SMR" id="B0RF30"/>
<dbReference type="KEGG" id="cms:CMS0846"/>
<dbReference type="eggNOG" id="COG1742">
    <property type="taxonomic scope" value="Bacteria"/>
</dbReference>
<dbReference type="HOGENOM" id="CLU_117653_0_1_11"/>
<dbReference type="OrthoDB" id="123240at2"/>
<dbReference type="Proteomes" id="UP000001318">
    <property type="component" value="Chromosome"/>
</dbReference>
<dbReference type="GO" id="GO:0005886">
    <property type="term" value="C:plasma membrane"/>
    <property type="evidence" value="ECO:0007669"/>
    <property type="project" value="UniProtKB-SubCell"/>
</dbReference>
<dbReference type="HAMAP" id="MF_00010">
    <property type="entry name" value="UPF0060"/>
    <property type="match status" value="1"/>
</dbReference>
<dbReference type="InterPro" id="IPR003844">
    <property type="entry name" value="UPF0060"/>
</dbReference>
<dbReference type="NCBIfam" id="NF002586">
    <property type="entry name" value="PRK02237.1"/>
    <property type="match status" value="1"/>
</dbReference>
<dbReference type="PANTHER" id="PTHR36116">
    <property type="entry name" value="UPF0060 MEMBRANE PROTEIN YNFA"/>
    <property type="match status" value="1"/>
</dbReference>
<dbReference type="PANTHER" id="PTHR36116:SF1">
    <property type="entry name" value="UPF0060 MEMBRANE PROTEIN YNFA"/>
    <property type="match status" value="1"/>
</dbReference>
<dbReference type="Pfam" id="PF02694">
    <property type="entry name" value="UPF0060"/>
    <property type="match status" value="1"/>
</dbReference>
<dbReference type="SUPFAM" id="SSF103481">
    <property type="entry name" value="Multidrug resistance efflux transporter EmrE"/>
    <property type="match status" value="1"/>
</dbReference>
<sequence>MLLRTVILFALAAVAEIGGAWLIWQAVREGRPFWWAGLGVMALGAYGFIATLQADASFGRILAAYGGVFVAGSLLWGTVVDGYRPDRWDVIGAVVCLVGVAVIMAAPRGQGA</sequence>
<gene>
    <name type="ordered locus">CMS0846</name>
</gene>